<protein>
    <recommendedName>
        <fullName>Fe(3+)-citrate import system permease protein YfmE</fullName>
    </recommendedName>
    <alternativeName>
        <fullName>Ferric-citrate import system permease protein</fullName>
    </alternativeName>
</protein>
<proteinExistence type="inferred from homology"/>
<reference key="1">
    <citation type="journal article" date="1997" name="Gene">
        <title>Cloning and sequencing of a 35.7 kb in the 70 degree-73 degree region of the Bacillus subtilis genome reveal genes for a new two-component system, three spore germination proteins, an iron uptake system and a general stress response protein.</title>
        <authorList>
            <person name="Yamamoto H."/>
            <person name="Uchiyama S."/>
            <person name="Nugroho F.A."/>
            <person name="Sekiguchi J."/>
        </authorList>
    </citation>
    <scope>NUCLEOTIDE SEQUENCE [GENOMIC DNA]</scope>
    <source>
        <strain>168 / AC327</strain>
    </source>
</reference>
<reference key="2">
    <citation type="journal article" date="1997" name="Nature">
        <title>The complete genome sequence of the Gram-positive bacterium Bacillus subtilis.</title>
        <authorList>
            <person name="Kunst F."/>
            <person name="Ogasawara N."/>
            <person name="Moszer I."/>
            <person name="Albertini A.M."/>
            <person name="Alloni G."/>
            <person name="Azevedo V."/>
            <person name="Bertero M.G."/>
            <person name="Bessieres P."/>
            <person name="Bolotin A."/>
            <person name="Borchert S."/>
            <person name="Borriss R."/>
            <person name="Boursier L."/>
            <person name="Brans A."/>
            <person name="Braun M."/>
            <person name="Brignell S.C."/>
            <person name="Bron S."/>
            <person name="Brouillet S."/>
            <person name="Bruschi C.V."/>
            <person name="Caldwell B."/>
            <person name="Capuano V."/>
            <person name="Carter N.M."/>
            <person name="Choi S.-K."/>
            <person name="Codani J.-J."/>
            <person name="Connerton I.F."/>
            <person name="Cummings N.J."/>
            <person name="Daniel R.A."/>
            <person name="Denizot F."/>
            <person name="Devine K.M."/>
            <person name="Duesterhoeft A."/>
            <person name="Ehrlich S.D."/>
            <person name="Emmerson P.T."/>
            <person name="Entian K.-D."/>
            <person name="Errington J."/>
            <person name="Fabret C."/>
            <person name="Ferrari E."/>
            <person name="Foulger D."/>
            <person name="Fritz C."/>
            <person name="Fujita M."/>
            <person name="Fujita Y."/>
            <person name="Fuma S."/>
            <person name="Galizzi A."/>
            <person name="Galleron N."/>
            <person name="Ghim S.-Y."/>
            <person name="Glaser P."/>
            <person name="Goffeau A."/>
            <person name="Golightly E.J."/>
            <person name="Grandi G."/>
            <person name="Guiseppi G."/>
            <person name="Guy B.J."/>
            <person name="Haga K."/>
            <person name="Haiech J."/>
            <person name="Harwood C.R."/>
            <person name="Henaut A."/>
            <person name="Hilbert H."/>
            <person name="Holsappel S."/>
            <person name="Hosono S."/>
            <person name="Hullo M.-F."/>
            <person name="Itaya M."/>
            <person name="Jones L.-M."/>
            <person name="Joris B."/>
            <person name="Karamata D."/>
            <person name="Kasahara Y."/>
            <person name="Klaerr-Blanchard M."/>
            <person name="Klein C."/>
            <person name="Kobayashi Y."/>
            <person name="Koetter P."/>
            <person name="Koningstein G."/>
            <person name="Krogh S."/>
            <person name="Kumano M."/>
            <person name="Kurita K."/>
            <person name="Lapidus A."/>
            <person name="Lardinois S."/>
            <person name="Lauber J."/>
            <person name="Lazarevic V."/>
            <person name="Lee S.-M."/>
            <person name="Levine A."/>
            <person name="Liu H."/>
            <person name="Masuda S."/>
            <person name="Mauel C."/>
            <person name="Medigue C."/>
            <person name="Medina N."/>
            <person name="Mellado R.P."/>
            <person name="Mizuno M."/>
            <person name="Moestl D."/>
            <person name="Nakai S."/>
            <person name="Noback M."/>
            <person name="Noone D."/>
            <person name="O'Reilly M."/>
            <person name="Ogawa K."/>
            <person name="Ogiwara A."/>
            <person name="Oudega B."/>
            <person name="Park S.-H."/>
            <person name="Parro V."/>
            <person name="Pohl T.M."/>
            <person name="Portetelle D."/>
            <person name="Porwollik S."/>
            <person name="Prescott A.M."/>
            <person name="Presecan E."/>
            <person name="Pujic P."/>
            <person name="Purnelle B."/>
            <person name="Rapoport G."/>
            <person name="Rey M."/>
            <person name="Reynolds S."/>
            <person name="Rieger M."/>
            <person name="Rivolta C."/>
            <person name="Rocha E."/>
            <person name="Roche B."/>
            <person name="Rose M."/>
            <person name="Sadaie Y."/>
            <person name="Sato T."/>
            <person name="Scanlan E."/>
            <person name="Schleich S."/>
            <person name="Schroeter R."/>
            <person name="Scoffone F."/>
            <person name="Sekiguchi J."/>
            <person name="Sekowska A."/>
            <person name="Seror S.J."/>
            <person name="Serror P."/>
            <person name="Shin B.-S."/>
            <person name="Soldo B."/>
            <person name="Sorokin A."/>
            <person name="Tacconi E."/>
            <person name="Takagi T."/>
            <person name="Takahashi H."/>
            <person name="Takemaru K."/>
            <person name="Takeuchi M."/>
            <person name="Tamakoshi A."/>
            <person name="Tanaka T."/>
            <person name="Terpstra P."/>
            <person name="Tognoni A."/>
            <person name="Tosato V."/>
            <person name="Uchiyama S."/>
            <person name="Vandenbol M."/>
            <person name="Vannier F."/>
            <person name="Vassarotti A."/>
            <person name="Viari A."/>
            <person name="Wambutt R."/>
            <person name="Wedler E."/>
            <person name="Wedler H."/>
            <person name="Weitzenegger T."/>
            <person name="Winters P."/>
            <person name="Wipat A."/>
            <person name="Yamamoto H."/>
            <person name="Yamane K."/>
            <person name="Yasumoto K."/>
            <person name="Yata K."/>
            <person name="Yoshida K."/>
            <person name="Yoshikawa H.-F."/>
            <person name="Zumstein E."/>
            <person name="Yoshikawa H."/>
            <person name="Danchin A."/>
        </authorList>
    </citation>
    <scope>NUCLEOTIDE SEQUENCE [LARGE SCALE GENOMIC DNA]</scope>
    <source>
        <strain>168</strain>
    </source>
</reference>
<reference key="3">
    <citation type="journal article" date="2006" name="J. Bacteriol.">
        <title>Role of the Fur regulon in iron transport in Bacillus subtilis.</title>
        <authorList>
            <person name="Ollinger J."/>
            <person name="Song K.-B."/>
            <person name="Antelmann H."/>
            <person name="Hecker M."/>
            <person name="Helmann J.D."/>
        </authorList>
    </citation>
    <scope>FUNCTION</scope>
</reference>
<accession>O34832</accession>
<accession>Q79ET1</accession>
<name>YFME_BACSU</name>
<organism>
    <name type="scientific">Bacillus subtilis (strain 168)</name>
    <dbReference type="NCBI Taxonomy" id="224308"/>
    <lineage>
        <taxon>Bacteria</taxon>
        <taxon>Bacillati</taxon>
        <taxon>Bacillota</taxon>
        <taxon>Bacilli</taxon>
        <taxon>Bacillales</taxon>
        <taxon>Bacillaceae</taxon>
        <taxon>Bacillus</taxon>
    </lineage>
</organism>
<sequence>MKKTTRKQKRPLLAILILAVILIVLSVISIGIGALYISPDAVVTNLLGLDHSFEFIIQQYRLPRIILAILAGAGLAAAGAILQGVIRNPLASPDVVGISKGSGLAAMAVILIFPESPVYVLPFSAFAGAAIIAVLLLMIARKKSIQPSSLALSGIALGAVCHAGMQYMMVKFPGDVNAALIWLTGSLWGRNWEEVKLLAPWLLILFPIVCILIPKLDLMSLGDELAQGLGENANRLRFILIFTAVALAGSCVAVVGSIGFIGLLAPHIARRLTGEKAKYLLPASALIGAIILLIADTLGRGIMPPVEIPAGILTAVIGAPYFLYLLKFEARKQ</sequence>
<feature type="chain" id="PRO_0000361677" description="Fe(3+)-citrate import system permease protein YfmE">
    <location>
        <begin position="1"/>
        <end position="333"/>
    </location>
</feature>
<feature type="transmembrane region" description="Helical" evidence="1">
    <location>
        <begin position="12"/>
        <end position="32"/>
    </location>
</feature>
<feature type="transmembrane region" description="Helical" evidence="1">
    <location>
        <begin position="65"/>
        <end position="85"/>
    </location>
</feature>
<feature type="transmembrane region" description="Helical" evidence="1">
    <location>
        <begin position="95"/>
        <end position="115"/>
    </location>
</feature>
<feature type="transmembrane region" description="Helical" evidence="1">
    <location>
        <begin position="120"/>
        <end position="140"/>
    </location>
</feature>
<feature type="transmembrane region" description="Helical" evidence="1">
    <location>
        <begin position="194"/>
        <end position="214"/>
    </location>
</feature>
<feature type="transmembrane region" description="Helical" evidence="1">
    <location>
        <begin position="238"/>
        <end position="258"/>
    </location>
</feature>
<feature type="transmembrane region" description="Helical" evidence="1">
    <location>
        <begin position="279"/>
        <end position="299"/>
    </location>
</feature>
<feature type="transmembrane region" description="Helical" evidence="1">
    <location>
        <begin position="306"/>
        <end position="326"/>
    </location>
</feature>
<evidence type="ECO:0000255" key="1"/>
<evidence type="ECO:0000305" key="2"/>
<evidence type="ECO:0000305" key="3">
    <source>
    </source>
</evidence>
<dbReference type="EMBL" id="D86417">
    <property type="protein sequence ID" value="BAA22319.1"/>
    <property type="molecule type" value="Genomic_DNA"/>
</dbReference>
<dbReference type="EMBL" id="AL009126">
    <property type="protein sequence ID" value="CAB12579.1"/>
    <property type="molecule type" value="Genomic_DNA"/>
</dbReference>
<dbReference type="PIR" id="D69812">
    <property type="entry name" value="D69812"/>
</dbReference>
<dbReference type="RefSeq" id="WP_003243506.1">
    <property type="nucleotide sequence ID" value="NZ_OZ025638.1"/>
</dbReference>
<dbReference type="SMR" id="O34832"/>
<dbReference type="FunCoup" id="O34832">
    <property type="interactions" value="187"/>
</dbReference>
<dbReference type="STRING" id="224308.BSU07500"/>
<dbReference type="PaxDb" id="224308-BSU07500"/>
<dbReference type="EnsemblBacteria" id="CAB12579">
    <property type="protein sequence ID" value="CAB12579"/>
    <property type="gene ID" value="BSU_07500"/>
</dbReference>
<dbReference type="GeneID" id="939692"/>
<dbReference type="KEGG" id="bsu:BSU07500"/>
<dbReference type="PATRIC" id="fig|224308.179.peg.816"/>
<dbReference type="eggNOG" id="COG0609">
    <property type="taxonomic scope" value="Bacteria"/>
</dbReference>
<dbReference type="InParanoid" id="O34832"/>
<dbReference type="OrthoDB" id="9811721at2"/>
<dbReference type="PhylomeDB" id="O34832"/>
<dbReference type="BioCyc" id="BSUB:BSU07500-MONOMER"/>
<dbReference type="Proteomes" id="UP000001570">
    <property type="component" value="Chromosome"/>
</dbReference>
<dbReference type="GO" id="GO:0005886">
    <property type="term" value="C:plasma membrane"/>
    <property type="evidence" value="ECO:0000318"/>
    <property type="project" value="GO_Central"/>
</dbReference>
<dbReference type="GO" id="GO:0022857">
    <property type="term" value="F:transmembrane transporter activity"/>
    <property type="evidence" value="ECO:0000318"/>
    <property type="project" value="GO_Central"/>
</dbReference>
<dbReference type="GO" id="GO:0033214">
    <property type="term" value="P:siderophore-dependent iron import into cell"/>
    <property type="evidence" value="ECO:0000318"/>
    <property type="project" value="GO_Central"/>
</dbReference>
<dbReference type="CDD" id="cd06550">
    <property type="entry name" value="TM_ABC_iron-siderophores_like"/>
    <property type="match status" value="1"/>
</dbReference>
<dbReference type="FunFam" id="1.10.3470.10:FF:000001">
    <property type="entry name" value="Vitamin B12 ABC transporter permease BtuC"/>
    <property type="match status" value="1"/>
</dbReference>
<dbReference type="Gene3D" id="1.10.3470.10">
    <property type="entry name" value="ABC transporter involved in vitamin B12 uptake, BtuC"/>
    <property type="match status" value="1"/>
</dbReference>
<dbReference type="InterPro" id="IPR037294">
    <property type="entry name" value="ABC_BtuC-like"/>
</dbReference>
<dbReference type="InterPro" id="IPR000522">
    <property type="entry name" value="ABC_transptr_permease_BtuC"/>
</dbReference>
<dbReference type="PANTHER" id="PTHR30472:SF37">
    <property type="entry name" value="FE(3+) DICITRATE TRANSPORT SYSTEM PERMEASE PROTEIN FECD-RELATED"/>
    <property type="match status" value="1"/>
</dbReference>
<dbReference type="PANTHER" id="PTHR30472">
    <property type="entry name" value="FERRIC ENTEROBACTIN TRANSPORT SYSTEM PERMEASE PROTEIN"/>
    <property type="match status" value="1"/>
</dbReference>
<dbReference type="Pfam" id="PF01032">
    <property type="entry name" value="FecCD"/>
    <property type="match status" value="1"/>
</dbReference>
<dbReference type="SUPFAM" id="SSF81345">
    <property type="entry name" value="ABC transporter involved in vitamin B12 uptake, BtuC"/>
    <property type="match status" value="1"/>
</dbReference>
<gene>
    <name type="primary">yfmE</name>
    <name type="ordered locus">BSU07500</name>
</gene>
<keyword id="KW-1003">Cell membrane</keyword>
<keyword id="KW-0406">Ion transport</keyword>
<keyword id="KW-0408">Iron</keyword>
<keyword id="KW-0410">Iron transport</keyword>
<keyword id="KW-0472">Membrane</keyword>
<keyword id="KW-1185">Reference proteome</keyword>
<keyword id="KW-0812">Transmembrane</keyword>
<keyword id="KW-1133">Transmembrane helix</keyword>
<keyword id="KW-0813">Transport</keyword>
<comment type="function">
    <text evidence="3">Part of the ABC transporter complex YfmCDEF involved in citrate-dependent Fe(3+) import. Involved in the translocation of the substrate across the membrane (Probable).</text>
</comment>
<comment type="subunit">
    <text evidence="2">The complex is composed of one ATP-binding protein (YfmF), two transmembrane proteins (YfmD and YfmE) and a solute-binding protein (YfmC).</text>
</comment>
<comment type="subcellular location">
    <subcellularLocation>
        <location evidence="2">Cell membrane</location>
        <topology evidence="2">Multi-pass membrane protein</topology>
    </subcellularLocation>
</comment>
<comment type="similarity">
    <text evidence="2">Belongs to the binding-protein-dependent transport system permease family. FecCD subfamily.</text>
</comment>